<feature type="chain" id="PRO_0000160140" description="Glucosamine-6-phosphate deaminase">
    <location>
        <begin position="1"/>
        <end position="241"/>
    </location>
</feature>
<feature type="active site" description="Proton acceptor; for enolization step" evidence="1">
    <location>
        <position position="67"/>
    </location>
</feature>
<feature type="active site" description="For ring-opening step" evidence="1">
    <location>
        <position position="136"/>
    </location>
</feature>
<feature type="active site" description="Proton acceptor; for ring-opening step" evidence="1">
    <location>
        <position position="138"/>
    </location>
</feature>
<feature type="active site" description="For ring-opening step" evidence="1">
    <location>
        <position position="143"/>
    </location>
</feature>
<gene>
    <name evidence="1" type="primary">nagB</name>
    <name type="ordered locus">CTC_02631</name>
</gene>
<organism>
    <name type="scientific">Clostridium tetani (strain Massachusetts / E88)</name>
    <dbReference type="NCBI Taxonomy" id="212717"/>
    <lineage>
        <taxon>Bacteria</taxon>
        <taxon>Bacillati</taxon>
        <taxon>Bacillota</taxon>
        <taxon>Clostridia</taxon>
        <taxon>Eubacteriales</taxon>
        <taxon>Clostridiaceae</taxon>
        <taxon>Clostridium</taxon>
    </lineage>
</organism>
<comment type="function">
    <text evidence="1">Catalyzes the reversible isomerization-deamination of glucosamine 6-phosphate (GlcN6P) to form fructose 6-phosphate (Fru6P) and ammonium ion.</text>
</comment>
<comment type="catalytic activity">
    <reaction evidence="1">
        <text>alpha-D-glucosamine 6-phosphate + H2O = beta-D-fructose 6-phosphate + NH4(+)</text>
        <dbReference type="Rhea" id="RHEA:12172"/>
        <dbReference type="ChEBI" id="CHEBI:15377"/>
        <dbReference type="ChEBI" id="CHEBI:28938"/>
        <dbReference type="ChEBI" id="CHEBI:57634"/>
        <dbReference type="ChEBI" id="CHEBI:75989"/>
        <dbReference type="EC" id="3.5.99.6"/>
    </reaction>
</comment>
<comment type="pathway">
    <text evidence="1">Amino-sugar metabolism; N-acetylneuraminate degradation; D-fructose 6-phosphate from N-acetylneuraminate: step 5/5.</text>
</comment>
<comment type="similarity">
    <text evidence="1">Belongs to the glucosamine/galactosamine-6-phosphate isomerase family. NagB subfamily.</text>
</comment>
<proteinExistence type="inferred from homology"/>
<evidence type="ECO:0000255" key="1">
    <source>
        <dbReference type="HAMAP-Rule" id="MF_01241"/>
    </source>
</evidence>
<reference key="1">
    <citation type="journal article" date="2003" name="Proc. Natl. Acad. Sci. U.S.A.">
        <title>The genome sequence of Clostridium tetani, the causative agent of tetanus disease.</title>
        <authorList>
            <person name="Brueggemann H."/>
            <person name="Baeumer S."/>
            <person name="Fricke W.F."/>
            <person name="Wiezer A."/>
            <person name="Liesegang H."/>
            <person name="Decker I."/>
            <person name="Herzberg C."/>
            <person name="Martinez-Arias R."/>
            <person name="Merkl R."/>
            <person name="Henne A."/>
            <person name="Gottschalk G."/>
        </authorList>
    </citation>
    <scope>NUCLEOTIDE SEQUENCE [LARGE SCALE GENOMIC DNA]</scope>
    <source>
        <strain>Massachusetts / E88</strain>
    </source>
</reference>
<sequence length="241" mass="26920">MKVLIKDNYDELSEVAALEILELIDKKPDCVLGLATGSTPVGTYQKLIEYYKKGKVDFSKVTSFNLDEYRGLNGEHPQSYKFFMNNTLFNHINIDKKNTFILDGLSNDIEKECIEYDKKIDNKGGIDLQILGIGGNGHIGFNEPSEELSISTHLTKLKTKTIKDNSRFFNSEEEVPTEAITMGIGSIMKARKIILLINGEVKAEIVKKLINGNVSTKVPASLLHLHPNCTVILDKEAAKFI</sequence>
<name>NAGB_CLOTE</name>
<keyword id="KW-0119">Carbohydrate metabolism</keyword>
<keyword id="KW-0378">Hydrolase</keyword>
<keyword id="KW-1185">Reference proteome</keyword>
<accession>Q890L6</accession>
<dbReference type="EC" id="3.5.99.6" evidence="1"/>
<dbReference type="EMBL" id="AE015927">
    <property type="protein sequence ID" value="AAO37081.1"/>
    <property type="molecule type" value="Genomic_DNA"/>
</dbReference>
<dbReference type="RefSeq" id="WP_011100741.1">
    <property type="nucleotide sequence ID" value="NC_004557.1"/>
</dbReference>
<dbReference type="SMR" id="Q890L6"/>
<dbReference type="STRING" id="212717.CTC_02631"/>
<dbReference type="GeneID" id="24255178"/>
<dbReference type="KEGG" id="ctc:CTC_02631"/>
<dbReference type="HOGENOM" id="CLU_049611_1_1_9"/>
<dbReference type="OrthoDB" id="9791139at2"/>
<dbReference type="UniPathway" id="UPA00629">
    <property type="reaction ID" value="UER00684"/>
</dbReference>
<dbReference type="Proteomes" id="UP000001412">
    <property type="component" value="Chromosome"/>
</dbReference>
<dbReference type="GO" id="GO:0005737">
    <property type="term" value="C:cytoplasm"/>
    <property type="evidence" value="ECO:0007669"/>
    <property type="project" value="TreeGrafter"/>
</dbReference>
<dbReference type="GO" id="GO:0004342">
    <property type="term" value="F:glucosamine-6-phosphate deaminase activity"/>
    <property type="evidence" value="ECO:0007669"/>
    <property type="project" value="UniProtKB-UniRule"/>
</dbReference>
<dbReference type="GO" id="GO:0042802">
    <property type="term" value="F:identical protein binding"/>
    <property type="evidence" value="ECO:0007669"/>
    <property type="project" value="TreeGrafter"/>
</dbReference>
<dbReference type="GO" id="GO:0005975">
    <property type="term" value="P:carbohydrate metabolic process"/>
    <property type="evidence" value="ECO:0007669"/>
    <property type="project" value="InterPro"/>
</dbReference>
<dbReference type="GO" id="GO:0006043">
    <property type="term" value="P:glucosamine catabolic process"/>
    <property type="evidence" value="ECO:0007669"/>
    <property type="project" value="TreeGrafter"/>
</dbReference>
<dbReference type="GO" id="GO:0006046">
    <property type="term" value="P:N-acetylglucosamine catabolic process"/>
    <property type="evidence" value="ECO:0007669"/>
    <property type="project" value="TreeGrafter"/>
</dbReference>
<dbReference type="GO" id="GO:0019262">
    <property type="term" value="P:N-acetylneuraminate catabolic process"/>
    <property type="evidence" value="ECO:0007669"/>
    <property type="project" value="UniProtKB-UniRule"/>
</dbReference>
<dbReference type="CDD" id="cd01399">
    <property type="entry name" value="GlcN6P_deaminase"/>
    <property type="match status" value="1"/>
</dbReference>
<dbReference type="FunFam" id="3.40.50.1360:FF:000003">
    <property type="entry name" value="Glucosamine-6-phosphate deaminase"/>
    <property type="match status" value="1"/>
</dbReference>
<dbReference type="Gene3D" id="3.40.50.1360">
    <property type="match status" value="1"/>
</dbReference>
<dbReference type="HAMAP" id="MF_01241">
    <property type="entry name" value="GlcN6P_deamin"/>
    <property type="match status" value="1"/>
</dbReference>
<dbReference type="InterPro" id="IPR006148">
    <property type="entry name" value="Glc/Gal-6P_isomerase"/>
</dbReference>
<dbReference type="InterPro" id="IPR004547">
    <property type="entry name" value="Glucosamine6P_isomerase"/>
</dbReference>
<dbReference type="InterPro" id="IPR018321">
    <property type="entry name" value="Glucosamine6P_isomerase_CS"/>
</dbReference>
<dbReference type="InterPro" id="IPR037171">
    <property type="entry name" value="NagB/RpiA_transferase-like"/>
</dbReference>
<dbReference type="NCBIfam" id="TIGR00502">
    <property type="entry name" value="nagB"/>
    <property type="match status" value="1"/>
</dbReference>
<dbReference type="PANTHER" id="PTHR11280">
    <property type="entry name" value="GLUCOSAMINE-6-PHOSPHATE ISOMERASE"/>
    <property type="match status" value="1"/>
</dbReference>
<dbReference type="PANTHER" id="PTHR11280:SF5">
    <property type="entry name" value="GLUCOSAMINE-6-PHOSPHATE ISOMERASE"/>
    <property type="match status" value="1"/>
</dbReference>
<dbReference type="Pfam" id="PF01182">
    <property type="entry name" value="Glucosamine_iso"/>
    <property type="match status" value="1"/>
</dbReference>
<dbReference type="SUPFAM" id="SSF100950">
    <property type="entry name" value="NagB/RpiA/CoA transferase-like"/>
    <property type="match status" value="1"/>
</dbReference>
<dbReference type="PROSITE" id="PS01161">
    <property type="entry name" value="GLC_GALNAC_ISOMERASE"/>
    <property type="match status" value="1"/>
</dbReference>
<protein>
    <recommendedName>
        <fullName evidence="1">Glucosamine-6-phosphate deaminase</fullName>
        <ecNumber evidence="1">3.5.99.6</ecNumber>
    </recommendedName>
    <alternativeName>
        <fullName evidence="1">GlcN6P deaminase</fullName>
        <shortName evidence="1">GNPDA</shortName>
    </alternativeName>
    <alternativeName>
        <fullName evidence="1">Glucosamine-6-phosphate isomerase</fullName>
    </alternativeName>
</protein>